<sequence>MSADRIPSFSVAELNTAIGNLLERGFAPRFLVEATVSRPQLKKGHLWLTLTDGEASISAVAWASQLRQLRYRPEDGDGVTVVGKLNFWAARASLNVQVLDIRPSLSTVLRQFELVRRRLEEAGLLDITRRRPLPRQPRTLAVLTSVPSSALADMLRTASERWPMTRLLVVPIPVQGSVAARIREVLGRLAEEASALGLDALVLARGGGSREDLAVFDDEDLCRDLAAFPVPVVTGLGHEDDLTVADLVADHRAATPTAAIVALLPDRHVALRELQQQRQRLRELRSRWLERQHQRLLDRRQALALLTPQRRLQQLRQQLEQRRALLRALSPQRWLKQGLALVSNGQGMTIDGVKGVRKKDTLTLSFHDGSIETVVTQVRPQNSSSTP</sequence>
<evidence type="ECO:0000255" key="1">
    <source>
        <dbReference type="HAMAP-Rule" id="MF_00378"/>
    </source>
</evidence>
<dbReference type="EC" id="3.1.11.6" evidence="1"/>
<dbReference type="EMBL" id="BX569694">
    <property type="protein sequence ID" value="CAE08696.1"/>
    <property type="molecule type" value="Genomic_DNA"/>
</dbReference>
<dbReference type="RefSeq" id="WP_011129036.1">
    <property type="nucleotide sequence ID" value="NC_005070.1"/>
</dbReference>
<dbReference type="SMR" id="Q7U490"/>
<dbReference type="STRING" id="84588.SYNW2181"/>
<dbReference type="KEGG" id="syw:SYNW2181"/>
<dbReference type="eggNOG" id="COG1570">
    <property type="taxonomic scope" value="Bacteria"/>
</dbReference>
<dbReference type="HOGENOM" id="CLU_023625_2_1_3"/>
<dbReference type="Proteomes" id="UP000001422">
    <property type="component" value="Chromosome"/>
</dbReference>
<dbReference type="GO" id="GO:0005737">
    <property type="term" value="C:cytoplasm"/>
    <property type="evidence" value="ECO:0007669"/>
    <property type="project" value="UniProtKB-SubCell"/>
</dbReference>
<dbReference type="GO" id="GO:0009318">
    <property type="term" value="C:exodeoxyribonuclease VII complex"/>
    <property type="evidence" value="ECO:0007669"/>
    <property type="project" value="InterPro"/>
</dbReference>
<dbReference type="GO" id="GO:0008855">
    <property type="term" value="F:exodeoxyribonuclease VII activity"/>
    <property type="evidence" value="ECO:0007669"/>
    <property type="project" value="UniProtKB-UniRule"/>
</dbReference>
<dbReference type="GO" id="GO:0003676">
    <property type="term" value="F:nucleic acid binding"/>
    <property type="evidence" value="ECO:0007669"/>
    <property type="project" value="InterPro"/>
</dbReference>
<dbReference type="GO" id="GO:0006308">
    <property type="term" value="P:DNA catabolic process"/>
    <property type="evidence" value="ECO:0007669"/>
    <property type="project" value="UniProtKB-UniRule"/>
</dbReference>
<dbReference type="CDD" id="cd04489">
    <property type="entry name" value="ExoVII_LU_OBF"/>
    <property type="match status" value="1"/>
</dbReference>
<dbReference type="HAMAP" id="MF_00378">
    <property type="entry name" value="Exonuc_7_L"/>
    <property type="match status" value="1"/>
</dbReference>
<dbReference type="InterPro" id="IPR003753">
    <property type="entry name" value="Exonuc_VII_L"/>
</dbReference>
<dbReference type="InterPro" id="IPR020579">
    <property type="entry name" value="Exonuc_VII_lsu_C"/>
</dbReference>
<dbReference type="InterPro" id="IPR025824">
    <property type="entry name" value="OB-fold_nuc-bd_dom"/>
</dbReference>
<dbReference type="NCBIfam" id="TIGR00237">
    <property type="entry name" value="xseA"/>
    <property type="match status" value="1"/>
</dbReference>
<dbReference type="PANTHER" id="PTHR30008">
    <property type="entry name" value="EXODEOXYRIBONUCLEASE 7 LARGE SUBUNIT"/>
    <property type="match status" value="1"/>
</dbReference>
<dbReference type="PANTHER" id="PTHR30008:SF0">
    <property type="entry name" value="EXODEOXYRIBONUCLEASE 7 LARGE SUBUNIT"/>
    <property type="match status" value="1"/>
</dbReference>
<dbReference type="Pfam" id="PF02601">
    <property type="entry name" value="Exonuc_VII_L"/>
    <property type="match status" value="1"/>
</dbReference>
<dbReference type="Pfam" id="PF13742">
    <property type="entry name" value="tRNA_anti_2"/>
    <property type="match status" value="1"/>
</dbReference>
<comment type="function">
    <text evidence="1">Bidirectionally degrades single-stranded DNA into large acid-insoluble oligonucleotides, which are then degraded further into small acid-soluble oligonucleotides.</text>
</comment>
<comment type="catalytic activity">
    <reaction evidence="1">
        <text>Exonucleolytic cleavage in either 5'- to 3'- or 3'- to 5'-direction to yield nucleoside 5'-phosphates.</text>
        <dbReference type="EC" id="3.1.11.6"/>
    </reaction>
</comment>
<comment type="subunit">
    <text evidence="1">Heterooligomer composed of large and small subunits.</text>
</comment>
<comment type="subcellular location">
    <subcellularLocation>
        <location evidence="1">Cytoplasm</location>
    </subcellularLocation>
</comment>
<comment type="similarity">
    <text evidence="1">Belongs to the XseA family.</text>
</comment>
<keyword id="KW-0963">Cytoplasm</keyword>
<keyword id="KW-0269">Exonuclease</keyword>
<keyword id="KW-0378">Hydrolase</keyword>
<keyword id="KW-0540">Nuclease</keyword>
<gene>
    <name evidence="1" type="primary">xseA</name>
    <name type="ordered locus">SYNW2181</name>
</gene>
<accession>Q7U490</accession>
<name>EX7L_PARMW</name>
<feature type="chain" id="PRO_0000303831" description="Exodeoxyribonuclease 7 large subunit">
    <location>
        <begin position="1"/>
        <end position="387"/>
    </location>
</feature>
<reference key="1">
    <citation type="journal article" date="2003" name="Nature">
        <title>The genome of a motile marine Synechococcus.</title>
        <authorList>
            <person name="Palenik B."/>
            <person name="Brahamsha B."/>
            <person name="Larimer F.W."/>
            <person name="Land M.L."/>
            <person name="Hauser L."/>
            <person name="Chain P."/>
            <person name="Lamerdin J.E."/>
            <person name="Regala W."/>
            <person name="Allen E.E."/>
            <person name="McCarren J."/>
            <person name="Paulsen I.T."/>
            <person name="Dufresne A."/>
            <person name="Partensky F."/>
            <person name="Webb E.A."/>
            <person name="Waterbury J."/>
        </authorList>
    </citation>
    <scope>NUCLEOTIDE SEQUENCE [LARGE SCALE GENOMIC DNA]</scope>
    <source>
        <strain>WH8102</strain>
    </source>
</reference>
<protein>
    <recommendedName>
        <fullName evidence="1">Exodeoxyribonuclease 7 large subunit</fullName>
        <ecNumber evidence="1">3.1.11.6</ecNumber>
    </recommendedName>
    <alternativeName>
        <fullName evidence="1">Exodeoxyribonuclease VII large subunit</fullName>
        <shortName evidence="1">Exonuclease VII large subunit</shortName>
    </alternativeName>
</protein>
<organism>
    <name type="scientific">Parasynechococcus marenigrum (strain WH8102)</name>
    <dbReference type="NCBI Taxonomy" id="84588"/>
    <lineage>
        <taxon>Bacteria</taxon>
        <taxon>Bacillati</taxon>
        <taxon>Cyanobacteriota</taxon>
        <taxon>Cyanophyceae</taxon>
        <taxon>Synechococcales</taxon>
        <taxon>Prochlorococcaceae</taxon>
        <taxon>Parasynechococcus</taxon>
        <taxon>Parasynechococcus marenigrum</taxon>
    </lineage>
</organism>
<proteinExistence type="inferred from homology"/>